<organism>
    <name type="scientific">Endomicrobium trichonymphae</name>
    <dbReference type="NCBI Taxonomy" id="1408204"/>
    <lineage>
        <taxon>Bacteria</taxon>
        <taxon>Pseudomonadati</taxon>
        <taxon>Elusimicrobiota</taxon>
        <taxon>Endomicrobiia</taxon>
        <taxon>Endomicrobiales</taxon>
        <taxon>Endomicrobiaceae</taxon>
        <taxon>Candidatus Endomicrobiellum</taxon>
    </lineage>
</organism>
<comment type="function">
    <text evidence="1">Bidirectionally degrades single-stranded DNA into large acid-insoluble oligonucleotides, which are then degraded further into small acid-soluble oligonucleotides.</text>
</comment>
<comment type="catalytic activity">
    <reaction evidence="1">
        <text>Exonucleolytic cleavage in either 5'- to 3'- or 3'- to 5'-direction to yield nucleoside 5'-phosphates.</text>
        <dbReference type="EC" id="3.1.11.6"/>
    </reaction>
</comment>
<comment type="subunit">
    <text evidence="1">Heterooligomer composed of large and small subunits.</text>
</comment>
<comment type="subcellular location">
    <subcellularLocation>
        <location evidence="1">Cytoplasm</location>
    </subcellularLocation>
</comment>
<comment type="similarity">
    <text evidence="1">Belongs to the XseB family.</text>
</comment>
<keyword id="KW-0963">Cytoplasm</keyword>
<keyword id="KW-0269">Exonuclease</keyword>
<keyword id="KW-0378">Hydrolase</keyword>
<keyword id="KW-0540">Nuclease</keyword>
<dbReference type="EC" id="3.1.11.6" evidence="1"/>
<dbReference type="EMBL" id="AP009510">
    <property type="protein sequence ID" value="BAG13807.1"/>
    <property type="molecule type" value="Genomic_DNA"/>
</dbReference>
<dbReference type="RefSeq" id="WP_015423334.1">
    <property type="nucleotide sequence ID" value="NC_020419.1"/>
</dbReference>
<dbReference type="SMR" id="B1GZX5"/>
<dbReference type="STRING" id="471821.TGRD_324"/>
<dbReference type="KEGG" id="eti:RSTT_297"/>
<dbReference type="KEGG" id="rsd:TGRD_324"/>
<dbReference type="HOGENOM" id="CLU_145918_3_4_0"/>
<dbReference type="OrthoDB" id="49164at2"/>
<dbReference type="Proteomes" id="UP000001691">
    <property type="component" value="Chromosome"/>
</dbReference>
<dbReference type="GO" id="GO:0005829">
    <property type="term" value="C:cytosol"/>
    <property type="evidence" value="ECO:0007669"/>
    <property type="project" value="TreeGrafter"/>
</dbReference>
<dbReference type="GO" id="GO:0009318">
    <property type="term" value="C:exodeoxyribonuclease VII complex"/>
    <property type="evidence" value="ECO:0007669"/>
    <property type="project" value="InterPro"/>
</dbReference>
<dbReference type="GO" id="GO:0008855">
    <property type="term" value="F:exodeoxyribonuclease VII activity"/>
    <property type="evidence" value="ECO:0007669"/>
    <property type="project" value="UniProtKB-UniRule"/>
</dbReference>
<dbReference type="GO" id="GO:0006308">
    <property type="term" value="P:DNA catabolic process"/>
    <property type="evidence" value="ECO:0007669"/>
    <property type="project" value="UniProtKB-UniRule"/>
</dbReference>
<dbReference type="Gene3D" id="1.10.287.1040">
    <property type="entry name" value="Exonuclease VII, small subunit"/>
    <property type="match status" value="1"/>
</dbReference>
<dbReference type="HAMAP" id="MF_00337">
    <property type="entry name" value="Exonuc_7_S"/>
    <property type="match status" value="1"/>
</dbReference>
<dbReference type="InterPro" id="IPR003761">
    <property type="entry name" value="Exonuc_VII_S"/>
</dbReference>
<dbReference type="InterPro" id="IPR037004">
    <property type="entry name" value="Exonuc_VII_ssu_sf"/>
</dbReference>
<dbReference type="NCBIfam" id="TIGR01280">
    <property type="entry name" value="xseB"/>
    <property type="match status" value="1"/>
</dbReference>
<dbReference type="PANTHER" id="PTHR34137">
    <property type="entry name" value="EXODEOXYRIBONUCLEASE 7 SMALL SUBUNIT"/>
    <property type="match status" value="1"/>
</dbReference>
<dbReference type="PANTHER" id="PTHR34137:SF1">
    <property type="entry name" value="EXODEOXYRIBONUCLEASE 7 SMALL SUBUNIT"/>
    <property type="match status" value="1"/>
</dbReference>
<dbReference type="Pfam" id="PF02609">
    <property type="entry name" value="Exonuc_VII_S"/>
    <property type="match status" value="1"/>
</dbReference>
<dbReference type="PIRSF" id="PIRSF006488">
    <property type="entry name" value="Exonuc_VII_S"/>
    <property type="match status" value="1"/>
</dbReference>
<dbReference type="SUPFAM" id="SSF116842">
    <property type="entry name" value="XseB-like"/>
    <property type="match status" value="1"/>
</dbReference>
<reference key="1">
    <citation type="journal article" date="2008" name="Proc. Natl. Acad. Sci. U.S.A.">
        <title>Complete genome of the uncultured termite group 1 bacteria in a single host protist cell.</title>
        <authorList>
            <person name="Hongoh Y."/>
            <person name="Sharma V.K."/>
            <person name="Prakash T."/>
            <person name="Noda S."/>
            <person name="Taylor T.D."/>
            <person name="Kudo T."/>
            <person name="Sakaki Y."/>
            <person name="Toyoda A."/>
            <person name="Hattori M."/>
            <person name="Ohkuma M."/>
        </authorList>
    </citation>
    <scope>NUCLEOTIDE SEQUENCE [LARGE SCALE GENOMIC DNA]</scope>
</reference>
<protein>
    <recommendedName>
        <fullName evidence="1">Exodeoxyribonuclease 7 small subunit</fullName>
        <ecNumber evidence="1">3.1.11.6</ecNumber>
    </recommendedName>
    <alternativeName>
        <fullName evidence="1">Exodeoxyribonuclease VII small subunit</fullName>
        <shortName evidence="1">Exonuclease VII small subunit</shortName>
    </alternativeName>
</protein>
<gene>
    <name evidence="1" type="primary">xseB</name>
    <name type="ordered locus">TGRD_324</name>
</gene>
<evidence type="ECO:0000255" key="1">
    <source>
        <dbReference type="HAMAP-Rule" id="MF_00337"/>
    </source>
</evidence>
<proteinExistence type="inferred from homology"/>
<name>EX7S_ENDTX</name>
<accession>B1GZX5</accession>
<feature type="chain" id="PRO_1000205237" description="Exodeoxyribonuclease 7 small subunit">
    <location>
        <begin position="1"/>
        <end position="71"/>
    </location>
</feature>
<sequence length="71" mass="8028">MNKKQLNFEKSLKKLEEIVSEIENADPDLDKALALFAEGAELIKSCLAKLNETKKKIEVIISSGKTEFFKE</sequence>